<proteinExistence type="inferred from homology"/>
<organism>
    <name type="scientific">Maricaulis maris (strain MCS10)</name>
    <name type="common">Caulobacter maris</name>
    <dbReference type="NCBI Taxonomy" id="394221"/>
    <lineage>
        <taxon>Bacteria</taxon>
        <taxon>Pseudomonadati</taxon>
        <taxon>Pseudomonadota</taxon>
        <taxon>Alphaproteobacteria</taxon>
        <taxon>Maricaulales</taxon>
        <taxon>Maricaulaceae</taxon>
        <taxon>Maricaulis</taxon>
    </lineage>
</organism>
<comment type="function">
    <text evidence="1">Participates actively in the response to hyperosmotic and heat shock by preventing the aggregation of stress-denatured proteins and by disaggregating proteins, also in an autonomous, DnaK-independent fashion. Unfolded proteins bind initially to DnaJ; upon interaction with the DnaJ-bound protein, DnaK hydrolyzes its bound ATP, resulting in the formation of a stable complex. GrpE releases ADP from DnaK; ATP binding to DnaK triggers the release of the substrate protein, thus completing the reaction cycle. Several rounds of ATP-dependent interactions between DnaJ, DnaK and GrpE are required for fully efficient folding. Also involved, together with DnaK and GrpE, in the DNA replication of plasmids through activation of initiation proteins.</text>
</comment>
<comment type="cofactor">
    <cofactor evidence="1">
        <name>Zn(2+)</name>
        <dbReference type="ChEBI" id="CHEBI:29105"/>
    </cofactor>
    <text evidence="1">Binds 2 Zn(2+) ions per monomer.</text>
</comment>
<comment type="subunit">
    <text evidence="1">Homodimer.</text>
</comment>
<comment type="subcellular location">
    <subcellularLocation>
        <location evidence="1">Cytoplasm</location>
    </subcellularLocation>
</comment>
<comment type="domain">
    <text evidence="1">The J domain is necessary and sufficient to stimulate DnaK ATPase activity. Zinc center 1 plays an important role in the autonomous, DnaK-independent chaperone activity of DnaJ. Zinc center 2 is essential for interaction with DnaK and for DnaJ activity.</text>
</comment>
<comment type="similarity">
    <text evidence="1">Belongs to the DnaJ family.</text>
</comment>
<keyword id="KW-0143">Chaperone</keyword>
<keyword id="KW-0963">Cytoplasm</keyword>
<keyword id="KW-0235">DNA replication</keyword>
<keyword id="KW-0479">Metal-binding</keyword>
<keyword id="KW-1185">Reference proteome</keyword>
<keyword id="KW-0677">Repeat</keyword>
<keyword id="KW-0346">Stress response</keyword>
<keyword id="KW-0862">Zinc</keyword>
<keyword id="KW-0863">Zinc-finger</keyword>
<sequence>MSKRDFYEVLGVDKTADEKTLKSAYRKQAMKYHPDRNPGDAEAEAQFKVVGEAYSVLSDPNKRAAYDRMGHAAFEQGGGMGGGQGPFGGGGGAADFADIFEQVFGEAFNMGGGGGRRGGRGQAGPARGSDLRFDMEISLEDAFNGKDETIKVPTAMNCERCDGQGNEPGTELETCGTCQGAGRIRRSQGFFTMEQTCPQCGGRGQYVKTPCNDCDGVGRVRKTRTLNVTVPAGVEDGTRIRLAGEGEAGARGGPRGDLYIFISVREHEIFERDGPNLYCRTPASMVQAALGCTIQVPTIEGGKAEMKIAEGAQTGKRMRMRGKGMPRLRGGPRGDMIVELFVETPRNLCDRQKELLKEFCDLSGEGCNPDSAGFFNKVKQFWDEVTTDDGRPNAG</sequence>
<gene>
    <name evidence="1" type="primary">dnaJ</name>
    <name type="ordered locus">Mmar10_2999</name>
</gene>
<evidence type="ECO:0000255" key="1">
    <source>
        <dbReference type="HAMAP-Rule" id="MF_01152"/>
    </source>
</evidence>
<dbReference type="EMBL" id="CP000449">
    <property type="protein sequence ID" value="ABI67280.1"/>
    <property type="molecule type" value="Genomic_DNA"/>
</dbReference>
<dbReference type="RefSeq" id="WP_011644924.1">
    <property type="nucleotide sequence ID" value="NC_008347.1"/>
</dbReference>
<dbReference type="SMR" id="Q0AKB3"/>
<dbReference type="STRING" id="394221.Mmar10_2999"/>
<dbReference type="KEGG" id="mmr:Mmar10_2999"/>
<dbReference type="eggNOG" id="COG0484">
    <property type="taxonomic scope" value="Bacteria"/>
</dbReference>
<dbReference type="HOGENOM" id="CLU_017633_0_7_5"/>
<dbReference type="OrthoDB" id="9779889at2"/>
<dbReference type="Proteomes" id="UP000001964">
    <property type="component" value="Chromosome"/>
</dbReference>
<dbReference type="GO" id="GO:0005737">
    <property type="term" value="C:cytoplasm"/>
    <property type="evidence" value="ECO:0007669"/>
    <property type="project" value="UniProtKB-SubCell"/>
</dbReference>
<dbReference type="GO" id="GO:0005524">
    <property type="term" value="F:ATP binding"/>
    <property type="evidence" value="ECO:0007669"/>
    <property type="project" value="InterPro"/>
</dbReference>
<dbReference type="GO" id="GO:0031072">
    <property type="term" value="F:heat shock protein binding"/>
    <property type="evidence" value="ECO:0007669"/>
    <property type="project" value="InterPro"/>
</dbReference>
<dbReference type="GO" id="GO:0051082">
    <property type="term" value="F:unfolded protein binding"/>
    <property type="evidence" value="ECO:0007669"/>
    <property type="project" value="UniProtKB-UniRule"/>
</dbReference>
<dbReference type="GO" id="GO:0008270">
    <property type="term" value="F:zinc ion binding"/>
    <property type="evidence" value="ECO:0007669"/>
    <property type="project" value="UniProtKB-UniRule"/>
</dbReference>
<dbReference type="GO" id="GO:0051085">
    <property type="term" value="P:chaperone cofactor-dependent protein refolding"/>
    <property type="evidence" value="ECO:0007669"/>
    <property type="project" value="TreeGrafter"/>
</dbReference>
<dbReference type="GO" id="GO:0006260">
    <property type="term" value="P:DNA replication"/>
    <property type="evidence" value="ECO:0007669"/>
    <property type="project" value="UniProtKB-KW"/>
</dbReference>
<dbReference type="GO" id="GO:0042026">
    <property type="term" value="P:protein refolding"/>
    <property type="evidence" value="ECO:0007669"/>
    <property type="project" value="TreeGrafter"/>
</dbReference>
<dbReference type="GO" id="GO:0009408">
    <property type="term" value="P:response to heat"/>
    <property type="evidence" value="ECO:0007669"/>
    <property type="project" value="InterPro"/>
</dbReference>
<dbReference type="CDD" id="cd06257">
    <property type="entry name" value="DnaJ"/>
    <property type="match status" value="1"/>
</dbReference>
<dbReference type="CDD" id="cd10747">
    <property type="entry name" value="DnaJ_C"/>
    <property type="match status" value="1"/>
</dbReference>
<dbReference type="CDD" id="cd10719">
    <property type="entry name" value="DnaJ_zf"/>
    <property type="match status" value="1"/>
</dbReference>
<dbReference type="FunFam" id="1.10.287.110:FF:000034">
    <property type="entry name" value="Chaperone protein DnaJ"/>
    <property type="match status" value="1"/>
</dbReference>
<dbReference type="FunFam" id="2.10.230.10:FF:000002">
    <property type="entry name" value="Molecular chaperone DnaJ"/>
    <property type="match status" value="1"/>
</dbReference>
<dbReference type="FunFam" id="2.60.260.20:FF:000004">
    <property type="entry name" value="Molecular chaperone DnaJ"/>
    <property type="match status" value="1"/>
</dbReference>
<dbReference type="Gene3D" id="1.10.287.110">
    <property type="entry name" value="DnaJ domain"/>
    <property type="match status" value="1"/>
</dbReference>
<dbReference type="Gene3D" id="2.10.230.10">
    <property type="entry name" value="Heat shock protein DnaJ, cysteine-rich domain"/>
    <property type="match status" value="1"/>
</dbReference>
<dbReference type="Gene3D" id="2.60.260.20">
    <property type="entry name" value="Urease metallochaperone UreE, N-terminal domain"/>
    <property type="match status" value="2"/>
</dbReference>
<dbReference type="HAMAP" id="MF_01152">
    <property type="entry name" value="DnaJ"/>
    <property type="match status" value="1"/>
</dbReference>
<dbReference type="InterPro" id="IPR012724">
    <property type="entry name" value="DnaJ"/>
</dbReference>
<dbReference type="InterPro" id="IPR002939">
    <property type="entry name" value="DnaJ_C"/>
</dbReference>
<dbReference type="InterPro" id="IPR001623">
    <property type="entry name" value="DnaJ_domain"/>
</dbReference>
<dbReference type="InterPro" id="IPR018253">
    <property type="entry name" value="DnaJ_domain_CS"/>
</dbReference>
<dbReference type="InterPro" id="IPR008971">
    <property type="entry name" value="HSP40/DnaJ_pept-bd"/>
</dbReference>
<dbReference type="InterPro" id="IPR001305">
    <property type="entry name" value="HSP_DnaJ_Cys-rich_dom"/>
</dbReference>
<dbReference type="InterPro" id="IPR036410">
    <property type="entry name" value="HSP_DnaJ_Cys-rich_dom_sf"/>
</dbReference>
<dbReference type="InterPro" id="IPR036869">
    <property type="entry name" value="J_dom_sf"/>
</dbReference>
<dbReference type="NCBIfam" id="TIGR02349">
    <property type="entry name" value="DnaJ_bact"/>
    <property type="match status" value="1"/>
</dbReference>
<dbReference type="NCBIfam" id="NF008035">
    <property type="entry name" value="PRK10767.1"/>
    <property type="match status" value="1"/>
</dbReference>
<dbReference type="PANTHER" id="PTHR43096:SF48">
    <property type="entry name" value="CHAPERONE PROTEIN DNAJ"/>
    <property type="match status" value="1"/>
</dbReference>
<dbReference type="PANTHER" id="PTHR43096">
    <property type="entry name" value="DNAJ HOMOLOG 1, MITOCHONDRIAL-RELATED"/>
    <property type="match status" value="1"/>
</dbReference>
<dbReference type="Pfam" id="PF00226">
    <property type="entry name" value="DnaJ"/>
    <property type="match status" value="1"/>
</dbReference>
<dbReference type="Pfam" id="PF01556">
    <property type="entry name" value="DnaJ_C"/>
    <property type="match status" value="1"/>
</dbReference>
<dbReference type="Pfam" id="PF00684">
    <property type="entry name" value="DnaJ_CXXCXGXG"/>
    <property type="match status" value="1"/>
</dbReference>
<dbReference type="PRINTS" id="PR00625">
    <property type="entry name" value="JDOMAIN"/>
</dbReference>
<dbReference type="SMART" id="SM00271">
    <property type="entry name" value="DnaJ"/>
    <property type="match status" value="1"/>
</dbReference>
<dbReference type="SUPFAM" id="SSF46565">
    <property type="entry name" value="Chaperone J-domain"/>
    <property type="match status" value="1"/>
</dbReference>
<dbReference type="SUPFAM" id="SSF57938">
    <property type="entry name" value="DnaJ/Hsp40 cysteine-rich domain"/>
    <property type="match status" value="1"/>
</dbReference>
<dbReference type="SUPFAM" id="SSF49493">
    <property type="entry name" value="HSP40/DnaJ peptide-binding domain"/>
    <property type="match status" value="2"/>
</dbReference>
<dbReference type="PROSITE" id="PS00636">
    <property type="entry name" value="DNAJ_1"/>
    <property type="match status" value="1"/>
</dbReference>
<dbReference type="PROSITE" id="PS50076">
    <property type="entry name" value="DNAJ_2"/>
    <property type="match status" value="1"/>
</dbReference>
<dbReference type="PROSITE" id="PS51188">
    <property type="entry name" value="ZF_CR"/>
    <property type="match status" value="1"/>
</dbReference>
<reference key="1">
    <citation type="submission" date="2006-08" db="EMBL/GenBank/DDBJ databases">
        <title>Complete sequence of Maricaulis maris MCS10.</title>
        <authorList>
            <consortium name="US DOE Joint Genome Institute"/>
            <person name="Copeland A."/>
            <person name="Lucas S."/>
            <person name="Lapidus A."/>
            <person name="Barry K."/>
            <person name="Detter J.C."/>
            <person name="Glavina del Rio T."/>
            <person name="Hammon N."/>
            <person name="Israni S."/>
            <person name="Dalin E."/>
            <person name="Tice H."/>
            <person name="Pitluck S."/>
            <person name="Saunders E."/>
            <person name="Brettin T."/>
            <person name="Bruce D."/>
            <person name="Han C."/>
            <person name="Tapia R."/>
            <person name="Gilna P."/>
            <person name="Schmutz J."/>
            <person name="Larimer F."/>
            <person name="Land M."/>
            <person name="Hauser L."/>
            <person name="Kyrpides N."/>
            <person name="Mikhailova N."/>
            <person name="Viollier P."/>
            <person name="Stephens C."/>
            <person name="Richardson P."/>
        </authorList>
    </citation>
    <scope>NUCLEOTIDE SEQUENCE [LARGE SCALE GENOMIC DNA]</scope>
    <source>
        <strain>MCS10</strain>
    </source>
</reference>
<accession>Q0AKB3</accession>
<name>DNAJ_MARMM</name>
<feature type="chain" id="PRO_1000085224" description="Chaperone protein DnaJ">
    <location>
        <begin position="1"/>
        <end position="395"/>
    </location>
</feature>
<feature type="domain" description="J" evidence="1">
    <location>
        <begin position="5"/>
        <end position="70"/>
    </location>
</feature>
<feature type="repeat" description="CXXCXGXG motif">
    <location>
        <begin position="158"/>
        <end position="165"/>
    </location>
</feature>
<feature type="repeat" description="CXXCXGXG motif">
    <location>
        <begin position="175"/>
        <end position="182"/>
    </location>
</feature>
<feature type="repeat" description="CXXCXGXG motif">
    <location>
        <begin position="197"/>
        <end position="204"/>
    </location>
</feature>
<feature type="repeat" description="CXXCXGXG motif">
    <location>
        <begin position="211"/>
        <end position="218"/>
    </location>
</feature>
<feature type="zinc finger region" description="CR-type" evidence="1">
    <location>
        <begin position="145"/>
        <end position="223"/>
    </location>
</feature>
<feature type="binding site" evidence="1">
    <location>
        <position position="158"/>
    </location>
    <ligand>
        <name>Zn(2+)</name>
        <dbReference type="ChEBI" id="CHEBI:29105"/>
        <label>1</label>
    </ligand>
</feature>
<feature type="binding site" evidence="1">
    <location>
        <position position="161"/>
    </location>
    <ligand>
        <name>Zn(2+)</name>
        <dbReference type="ChEBI" id="CHEBI:29105"/>
        <label>1</label>
    </ligand>
</feature>
<feature type="binding site" evidence="1">
    <location>
        <position position="175"/>
    </location>
    <ligand>
        <name>Zn(2+)</name>
        <dbReference type="ChEBI" id="CHEBI:29105"/>
        <label>2</label>
    </ligand>
</feature>
<feature type="binding site" evidence="1">
    <location>
        <position position="178"/>
    </location>
    <ligand>
        <name>Zn(2+)</name>
        <dbReference type="ChEBI" id="CHEBI:29105"/>
        <label>2</label>
    </ligand>
</feature>
<feature type="binding site" evidence="1">
    <location>
        <position position="197"/>
    </location>
    <ligand>
        <name>Zn(2+)</name>
        <dbReference type="ChEBI" id="CHEBI:29105"/>
        <label>2</label>
    </ligand>
</feature>
<feature type="binding site" evidence="1">
    <location>
        <position position="200"/>
    </location>
    <ligand>
        <name>Zn(2+)</name>
        <dbReference type="ChEBI" id="CHEBI:29105"/>
        <label>2</label>
    </ligand>
</feature>
<feature type="binding site" evidence="1">
    <location>
        <position position="211"/>
    </location>
    <ligand>
        <name>Zn(2+)</name>
        <dbReference type="ChEBI" id="CHEBI:29105"/>
        <label>1</label>
    </ligand>
</feature>
<feature type="binding site" evidence="1">
    <location>
        <position position="214"/>
    </location>
    <ligand>
        <name>Zn(2+)</name>
        <dbReference type="ChEBI" id="CHEBI:29105"/>
        <label>1</label>
    </ligand>
</feature>
<protein>
    <recommendedName>
        <fullName evidence="1">Chaperone protein DnaJ</fullName>
    </recommendedName>
</protein>